<sequence length="80" mass="8864">MKSFLLIALVLFFLFVSYASAKKKCQLPSDVGKGKASFTRYYYNEESGKCETFIYGGVGGNSNNFLTKEDCCRECAQGSC</sequence>
<protein>
    <recommendedName>
        <fullName evidence="7 8">Kunitz-type serine protease inhibitor LmKTT-1a</fullName>
    </recommendedName>
    <alternativeName>
        <fullName>Delta-KTx 2.1</fullName>
    </alternativeName>
    <alternativeName>
        <fullName evidence="6 7">SdPI-2</fullName>
    </alternativeName>
    <alternativeName>
        <fullName>SdPII</fullName>
    </alternativeName>
</protein>
<dbReference type="EMBL" id="GT028614">
    <property type="status" value="NOT_ANNOTATED_CDS"/>
    <property type="molecule type" value="mRNA"/>
</dbReference>
<dbReference type="PDB" id="2M01">
    <property type="method" value="NMR"/>
    <property type="chains" value="A=22-80"/>
</dbReference>
<dbReference type="PDBsum" id="2M01"/>
<dbReference type="SMR" id="P0DJ46"/>
<dbReference type="EvolutionaryTrace" id="P0DJ46"/>
<dbReference type="GO" id="GO:0005576">
    <property type="term" value="C:extracellular region"/>
    <property type="evidence" value="ECO:0000303"/>
    <property type="project" value="UniProtKB"/>
</dbReference>
<dbReference type="GO" id="GO:0005615">
    <property type="term" value="C:extracellular space"/>
    <property type="evidence" value="ECO:0007669"/>
    <property type="project" value="TreeGrafter"/>
</dbReference>
<dbReference type="GO" id="GO:0033644">
    <property type="term" value="C:host cell membrane"/>
    <property type="evidence" value="ECO:0000303"/>
    <property type="project" value="UniProtKB"/>
</dbReference>
<dbReference type="GO" id="GO:0015459">
    <property type="term" value="F:potassium channel regulator activity"/>
    <property type="evidence" value="ECO:0007669"/>
    <property type="project" value="UniProtKB-KW"/>
</dbReference>
<dbReference type="GO" id="GO:0004867">
    <property type="term" value="F:serine-type endopeptidase inhibitor activity"/>
    <property type="evidence" value="ECO:0000314"/>
    <property type="project" value="UniProtKB"/>
</dbReference>
<dbReference type="GO" id="GO:0090729">
    <property type="term" value="F:toxin activity"/>
    <property type="evidence" value="ECO:0007669"/>
    <property type="project" value="UniProtKB-KW"/>
</dbReference>
<dbReference type="GO" id="GO:0044562">
    <property type="term" value="P:envenomation resulting in negative regulation of voltage-gated potassium channel activity in another organism"/>
    <property type="evidence" value="ECO:0000314"/>
    <property type="project" value="UniProtKB"/>
</dbReference>
<dbReference type="CDD" id="cd22620">
    <property type="entry name" value="Kunitz_KTT"/>
    <property type="match status" value="1"/>
</dbReference>
<dbReference type="Gene3D" id="4.10.410.10">
    <property type="entry name" value="Pancreatic trypsin inhibitor Kunitz domain"/>
    <property type="match status" value="1"/>
</dbReference>
<dbReference type="InterPro" id="IPR002223">
    <property type="entry name" value="Kunitz_BPTI"/>
</dbReference>
<dbReference type="InterPro" id="IPR036880">
    <property type="entry name" value="Kunitz_BPTI_sf"/>
</dbReference>
<dbReference type="InterPro" id="IPR050098">
    <property type="entry name" value="TFPI/VKTCI-like"/>
</dbReference>
<dbReference type="PANTHER" id="PTHR10083:SF374">
    <property type="entry name" value="BPTI_KUNITZ INHIBITOR DOMAIN-CONTAINING PROTEIN"/>
    <property type="match status" value="1"/>
</dbReference>
<dbReference type="PANTHER" id="PTHR10083">
    <property type="entry name" value="KUNITZ-TYPE PROTEASE INHIBITOR-RELATED"/>
    <property type="match status" value="1"/>
</dbReference>
<dbReference type="Pfam" id="PF00014">
    <property type="entry name" value="Kunitz_BPTI"/>
    <property type="match status" value="1"/>
</dbReference>
<dbReference type="PRINTS" id="PR00759">
    <property type="entry name" value="BASICPTASE"/>
</dbReference>
<dbReference type="SMART" id="SM00131">
    <property type="entry name" value="KU"/>
    <property type="match status" value="1"/>
</dbReference>
<dbReference type="SUPFAM" id="SSF57362">
    <property type="entry name" value="BPTI-like"/>
    <property type="match status" value="1"/>
</dbReference>
<dbReference type="PROSITE" id="PS50279">
    <property type="entry name" value="BPTI_KUNITZ_2"/>
    <property type="match status" value="1"/>
</dbReference>
<evidence type="ECO:0000250" key="1"/>
<evidence type="ECO:0000255" key="2"/>
<evidence type="ECO:0000255" key="3">
    <source>
        <dbReference type="PROSITE-ProRule" id="PRU00031"/>
    </source>
</evidence>
<evidence type="ECO:0000269" key="4">
    <source>
    </source>
</evidence>
<evidence type="ECO:0000269" key="5">
    <source>
    </source>
</evidence>
<evidence type="ECO:0000303" key="6">
    <source>
    </source>
</evidence>
<evidence type="ECO:0000303" key="7">
    <source>
    </source>
</evidence>
<evidence type="ECO:0000303" key="8">
    <source>
    </source>
</evidence>
<evidence type="ECO:0000305" key="9"/>
<evidence type="ECO:0000305" key="10">
    <source>
    </source>
</evidence>
<evidence type="ECO:0000305" key="11">
    <source>
    </source>
</evidence>
<evidence type="ECO:0000312" key="12">
    <source>
        <dbReference type="PDB" id="2M01"/>
    </source>
</evidence>
<evidence type="ECO:0007744" key="13">
    <source>
        <dbReference type="PDB" id="2M01"/>
    </source>
</evidence>
<evidence type="ECO:0007829" key="14">
    <source>
        <dbReference type="PDB" id="2M01"/>
    </source>
</evidence>
<reference key="1">
    <citation type="journal article" date="2010" name="BMC Genomics">
        <title>Comparative venom gland transcriptome analysis of the scorpion Lychas mucronatus reveals intraspecific toxic gene diversity and new venomous components.</title>
        <authorList>
            <person name="Zhao R."/>
            <person name="Ma Y."/>
            <person name="He Y."/>
            <person name="Di Z."/>
            <person name="Wu Y.-L."/>
            <person name="Cao Z.-J."/>
            <person name="Li W.-X."/>
        </authorList>
    </citation>
    <scope>NUCLEOTIDE SEQUENCE [MRNA]</scope>
    <source>
        <strain>Yunnan</strain>
        <tissue>Venom gland</tissue>
    </source>
</reference>
<reference evidence="12" key="2">
    <citation type="journal article" date="2013" name="PLoS ONE">
        <title>Genomic and structural characterization of Kunitz-type peptide LmKTT-1a highlights diversity and evolution of scorpion potassium channel toxins.</title>
        <authorList>
            <person name="Chen Z."/>
            <person name="Luo F."/>
            <person name="Feng J."/>
            <person name="Yang W."/>
            <person name="Zeng D."/>
            <person name="Zhao R."/>
            <person name="Cao Z."/>
            <person name="Liu M."/>
            <person name="Li W."/>
            <person name="Jiang L."/>
            <person name="Wu Y."/>
        </authorList>
    </citation>
    <scope>NUCLEOTIDE SEQUENCE [GENOMIC DNA]</scope>
    <scope>STRUCTURE BY NMR OF 22-80</scope>
    <scope>DISULFIDE BONDS</scope>
    <scope>MUTAGENESIS OF CYS-72 AND CYS-80</scope>
    <scope>NOMENCLATURE</scope>
</reference>
<reference key="3">
    <citation type="journal article" date="2011" name="PLoS ONE">
        <title>SdPI, the first functionally characterized Kunitz-type trypsin inhibitor from scorpion venom.</title>
        <authorList>
            <person name="Zhao R.M."/>
            <person name="Dai H."/>
            <person name="Qiu S."/>
            <person name="Li T."/>
            <person name="He Y."/>
            <person name="Ma Y."/>
            <person name="Chen Z.-Y."/>
            <person name="Wu Y.-L."/>
            <person name="Li W.-X."/>
            <person name="Cao Z.-J."/>
        </authorList>
    </citation>
    <scope>FUNCTION</scope>
</reference>
<reference key="4">
    <citation type="journal article" date="2012" name="J. Biol. Chem.">
        <title>Hg1, novel peptide inhibitor specific for Kv1.3 channels from first scorpion Kunitz-type potassium channel toxin family.</title>
        <authorList>
            <person name="Chen Z.-Y."/>
            <person name="Hu Y.T."/>
            <person name="Yang W.S."/>
            <person name="He Y.W."/>
            <person name="Feng J."/>
            <person name="Wang B."/>
            <person name="Zhao R.M."/>
            <person name="Ding J.P."/>
            <person name="Cao Z.-J."/>
            <person name="Li W.-X."/>
            <person name="Wu Y.-L."/>
        </authorList>
    </citation>
    <scope>FUNCTION</scope>
    <scope>RECOMBINANT EXPRESSION</scope>
</reference>
<organism>
    <name type="scientific">Lychas mucronatus</name>
    <name type="common">Chinese swimming scorpion</name>
    <dbReference type="NCBI Taxonomy" id="172552"/>
    <lineage>
        <taxon>Eukaryota</taxon>
        <taxon>Metazoa</taxon>
        <taxon>Ecdysozoa</taxon>
        <taxon>Arthropoda</taxon>
        <taxon>Chelicerata</taxon>
        <taxon>Arachnida</taxon>
        <taxon>Scorpiones</taxon>
        <taxon>Buthida</taxon>
        <taxon>Buthoidea</taxon>
        <taxon>Buthidae</taxon>
        <taxon>Lychas</taxon>
    </lineage>
</organism>
<proteinExistence type="evidence at protein level"/>
<keyword id="KW-0002">3D-structure</keyword>
<keyword id="KW-1015">Disulfide bond</keyword>
<keyword id="KW-0646">Protease inhibitor</keyword>
<keyword id="KW-0964">Secreted</keyword>
<keyword id="KW-0722">Serine protease inhibitor</keyword>
<keyword id="KW-0732">Signal</keyword>
<name>VKT21_LYCMC</name>
<feature type="signal peptide" evidence="2">
    <location>
        <begin position="1"/>
        <end position="21"/>
    </location>
</feature>
<feature type="chain" id="PRO_0000418102" description="Kunitz-type serine protease inhibitor LmKTT-1a">
    <location>
        <begin position="22"/>
        <end position="80"/>
    </location>
</feature>
<feature type="domain" description="BPTI/Kunitz inhibitor" evidence="3">
    <location>
        <begin position="25"/>
        <end position="75"/>
    </location>
</feature>
<feature type="site" description="Key residue that directly interacts with the S1 pocket of trypsin" evidence="1">
    <location>
        <position position="35"/>
    </location>
</feature>
<feature type="disulfide bond" evidence="5 13">
    <location>
        <begin position="25"/>
        <end position="75"/>
    </location>
</feature>
<feature type="disulfide bond" evidence="5 13">
    <location>
        <begin position="50"/>
        <end position="71"/>
    </location>
</feature>
<feature type="disulfide bond" evidence="5 13">
    <location>
        <begin position="72"/>
        <end position="80"/>
    </location>
</feature>
<feature type="mutagenesis site" description="5-fold decrease in trypsin inhibition, and no change in Kv1.3/KCNA3 inhibition; when associated with A-80." evidence="5">
    <original>C</original>
    <variation>A</variation>
    <location>
        <position position="72"/>
    </location>
</feature>
<feature type="mutagenesis site" description="5-fold decrease in trypsin inhibition, and no change in Kv1.3/KCNA3 inhibition; when associated with A-72." evidence="5">
    <original>C</original>
    <variation>A</variation>
    <location>
        <position position="80"/>
    </location>
</feature>
<feature type="strand" evidence="14">
    <location>
        <begin position="38"/>
        <end position="44"/>
    </location>
</feature>
<feature type="turn" evidence="14">
    <location>
        <begin position="45"/>
        <end position="48"/>
    </location>
</feature>
<feature type="strand" evidence="14">
    <location>
        <begin position="49"/>
        <end position="55"/>
    </location>
</feature>
<feature type="helix" evidence="14">
    <location>
        <begin position="70"/>
        <end position="76"/>
    </location>
</feature>
<comment type="function">
    <text evidence="4">Serine protease inhibitor that inhibits trypsin at a molar ratio of 1:1 (Ki=140 nM).</text>
</comment>
<comment type="subcellular location">
    <subcellularLocation>
        <location evidence="11">Secreted</location>
    </subcellularLocation>
</comment>
<comment type="tissue specificity">
    <text evidence="10 11">Expressed by the venom gland.</text>
</comment>
<comment type="PTM">
    <text evidence="9">Lacks the conserved CysII-CysIV disulfide bond but contains 2 cysteine residues at the C-terminus that generate a new disulfide bond.</text>
</comment>
<comment type="miscellaneous">
    <text evidence="4">Negative results: has no effect on chymotrypsin and elastase. Shows weak inhibitory activity against mKv1.3/KCNA3 potassium channels (inhibits 50% of currents at 1 uM) (IC(50)=1.58 uM), Kv1.1/KCNA1 (inhibits 25% of currents at 1 uM), and Kv1.2/KCNA2 (1 uM inhibits 25% of currents).</text>
</comment>
<comment type="similarity">
    <text evidence="9">Belongs to the venom Kunitz-type family. Scorpion delta-Ktx subfamily. Delta-Ktx 2 sub-subfamily.</text>
</comment>
<accession>P0DJ46</accession>
<accession>P0CJ20</accession>